<dbReference type="EMBL" id="BX897699">
    <property type="protein sequence ID" value="CAF27830.1"/>
    <property type="molecule type" value="Genomic_DNA"/>
</dbReference>
<dbReference type="RefSeq" id="WP_011180902.1">
    <property type="nucleotide sequence ID" value="NZ_LRIJ02000001.1"/>
</dbReference>
<dbReference type="SMR" id="Q6G2X7"/>
<dbReference type="PaxDb" id="283166-BH10390"/>
<dbReference type="EnsemblBacteria" id="CAF27830">
    <property type="protein sequence ID" value="CAF27830"/>
    <property type="gene ID" value="BH10390"/>
</dbReference>
<dbReference type="GeneID" id="92985275"/>
<dbReference type="KEGG" id="bhe:BH10390"/>
<dbReference type="eggNOG" id="COG0094">
    <property type="taxonomic scope" value="Bacteria"/>
</dbReference>
<dbReference type="OrthoDB" id="9806626at2"/>
<dbReference type="Proteomes" id="UP000000421">
    <property type="component" value="Chromosome"/>
</dbReference>
<dbReference type="GO" id="GO:1990904">
    <property type="term" value="C:ribonucleoprotein complex"/>
    <property type="evidence" value="ECO:0007669"/>
    <property type="project" value="UniProtKB-KW"/>
</dbReference>
<dbReference type="GO" id="GO:0005840">
    <property type="term" value="C:ribosome"/>
    <property type="evidence" value="ECO:0007669"/>
    <property type="project" value="UniProtKB-KW"/>
</dbReference>
<dbReference type="GO" id="GO:0019843">
    <property type="term" value="F:rRNA binding"/>
    <property type="evidence" value="ECO:0007669"/>
    <property type="project" value="UniProtKB-UniRule"/>
</dbReference>
<dbReference type="GO" id="GO:0003735">
    <property type="term" value="F:structural constituent of ribosome"/>
    <property type="evidence" value="ECO:0007669"/>
    <property type="project" value="InterPro"/>
</dbReference>
<dbReference type="GO" id="GO:0000049">
    <property type="term" value="F:tRNA binding"/>
    <property type="evidence" value="ECO:0007669"/>
    <property type="project" value="UniProtKB-UniRule"/>
</dbReference>
<dbReference type="GO" id="GO:0006412">
    <property type="term" value="P:translation"/>
    <property type="evidence" value="ECO:0007669"/>
    <property type="project" value="UniProtKB-UniRule"/>
</dbReference>
<dbReference type="FunFam" id="3.30.1440.10:FF:000001">
    <property type="entry name" value="50S ribosomal protein L5"/>
    <property type="match status" value="1"/>
</dbReference>
<dbReference type="Gene3D" id="3.30.1440.10">
    <property type="match status" value="1"/>
</dbReference>
<dbReference type="HAMAP" id="MF_01333_B">
    <property type="entry name" value="Ribosomal_uL5_B"/>
    <property type="match status" value="1"/>
</dbReference>
<dbReference type="InterPro" id="IPR002132">
    <property type="entry name" value="Ribosomal_uL5"/>
</dbReference>
<dbReference type="InterPro" id="IPR020930">
    <property type="entry name" value="Ribosomal_uL5_bac-type"/>
</dbReference>
<dbReference type="InterPro" id="IPR031309">
    <property type="entry name" value="Ribosomal_uL5_C"/>
</dbReference>
<dbReference type="InterPro" id="IPR020929">
    <property type="entry name" value="Ribosomal_uL5_CS"/>
</dbReference>
<dbReference type="InterPro" id="IPR022803">
    <property type="entry name" value="Ribosomal_uL5_dom_sf"/>
</dbReference>
<dbReference type="InterPro" id="IPR031310">
    <property type="entry name" value="Ribosomal_uL5_N"/>
</dbReference>
<dbReference type="NCBIfam" id="NF000585">
    <property type="entry name" value="PRK00010.1"/>
    <property type="match status" value="1"/>
</dbReference>
<dbReference type="PANTHER" id="PTHR11994">
    <property type="entry name" value="60S RIBOSOMAL PROTEIN L11-RELATED"/>
    <property type="match status" value="1"/>
</dbReference>
<dbReference type="Pfam" id="PF00281">
    <property type="entry name" value="Ribosomal_L5"/>
    <property type="match status" value="1"/>
</dbReference>
<dbReference type="Pfam" id="PF00673">
    <property type="entry name" value="Ribosomal_L5_C"/>
    <property type="match status" value="1"/>
</dbReference>
<dbReference type="PIRSF" id="PIRSF002161">
    <property type="entry name" value="Ribosomal_L5"/>
    <property type="match status" value="1"/>
</dbReference>
<dbReference type="SUPFAM" id="SSF55282">
    <property type="entry name" value="RL5-like"/>
    <property type="match status" value="1"/>
</dbReference>
<dbReference type="PROSITE" id="PS00358">
    <property type="entry name" value="RIBOSOMAL_L5"/>
    <property type="match status" value="1"/>
</dbReference>
<protein>
    <recommendedName>
        <fullName evidence="1">Large ribosomal subunit protein uL5</fullName>
    </recommendedName>
    <alternativeName>
        <fullName evidence="2">50S ribosomal protein L5</fullName>
    </alternativeName>
</protein>
<name>RL5_BARHE</name>
<reference key="1">
    <citation type="journal article" date="2004" name="Proc. Natl. Acad. Sci. U.S.A.">
        <title>The louse-borne human pathogen Bartonella quintana is a genomic derivative of the zoonotic agent Bartonella henselae.</title>
        <authorList>
            <person name="Alsmark U.C.M."/>
            <person name="Frank A.C."/>
            <person name="Karlberg E.O."/>
            <person name="Legault B.-A."/>
            <person name="Ardell D.H."/>
            <person name="Canbaeck B."/>
            <person name="Eriksson A.-S."/>
            <person name="Naeslund A.K."/>
            <person name="Handley S.A."/>
            <person name="Huvet M."/>
            <person name="La Scola B."/>
            <person name="Holmberg M."/>
            <person name="Andersson S.G.E."/>
        </authorList>
    </citation>
    <scope>NUCLEOTIDE SEQUENCE [LARGE SCALE GENOMIC DNA]</scope>
    <source>
        <strain>ATCC 49882 / DSM 28221 / CCUG 30454 / Houston 1</strain>
    </source>
</reference>
<feature type="chain" id="PRO_0000242971" description="Large ribosomal subunit protein uL5">
    <location>
        <begin position="1"/>
        <end position="185"/>
    </location>
</feature>
<keyword id="KW-0687">Ribonucleoprotein</keyword>
<keyword id="KW-0689">Ribosomal protein</keyword>
<keyword id="KW-0694">RNA-binding</keyword>
<keyword id="KW-0699">rRNA-binding</keyword>
<keyword id="KW-0820">tRNA-binding</keyword>
<organism>
    <name type="scientific">Bartonella henselae (strain ATCC 49882 / DSM 28221 / CCUG 30454 / Houston 1)</name>
    <name type="common">Rochalimaea henselae</name>
    <dbReference type="NCBI Taxonomy" id="283166"/>
    <lineage>
        <taxon>Bacteria</taxon>
        <taxon>Pseudomonadati</taxon>
        <taxon>Pseudomonadota</taxon>
        <taxon>Alphaproteobacteria</taxon>
        <taxon>Hyphomicrobiales</taxon>
        <taxon>Bartonellaceae</taxon>
        <taxon>Bartonella</taxon>
    </lineage>
</organism>
<accession>Q6G2X7</accession>
<proteinExistence type="inferred from homology"/>
<comment type="function">
    <text evidence="1">This is one of the proteins that bind and probably mediate the attachment of the 5S RNA into the large ribosomal subunit, where it forms part of the central protuberance. In the 70S ribosome it contacts protein S13 of the 30S subunit (bridge B1b), connecting the 2 subunits; this bridge is implicated in subunit movement. Contacts the P site tRNA; the 5S rRNA and some of its associated proteins might help stabilize positioning of ribosome-bound tRNAs.</text>
</comment>
<comment type="subunit">
    <text evidence="1">Part of the 50S ribosomal subunit; part of the 5S rRNA/L5/L18/L25 subcomplex. Contacts the 5S rRNA and the P site tRNA. Forms a bridge to the 30S subunit in the 70S ribosome.</text>
</comment>
<comment type="similarity">
    <text evidence="1">Belongs to the universal ribosomal protein uL5 family.</text>
</comment>
<sequence length="185" mass="21186">MAEEKQTPRMKTHYFEVVRKTLQEKFNYKNVMQIPRVDKIVINMGIGEATADSKKPSIAAEDLGLITGQKAVVTRARNSIATFKVREGMPLGAKVTLRKDRMFEFLDRLVTIALPRVRDFRGLNPKSFDGRGNFAMGIKEHIVFPEINYDKVDQIWGMDIIVCTTAKTDDEARELLRAFNFPFRS</sequence>
<evidence type="ECO:0000255" key="1">
    <source>
        <dbReference type="HAMAP-Rule" id="MF_01333"/>
    </source>
</evidence>
<evidence type="ECO:0000305" key="2"/>
<gene>
    <name evidence="1" type="primary">rplE</name>
    <name type="ordered locus">BH10390</name>
</gene>